<evidence type="ECO:0000250" key="1"/>
<evidence type="ECO:0000255" key="2">
    <source>
        <dbReference type="PROSITE-ProRule" id="PRU00159"/>
    </source>
</evidence>
<evidence type="ECO:0000255" key="3">
    <source>
        <dbReference type="PROSITE-ProRule" id="PRU10027"/>
    </source>
</evidence>
<evidence type="ECO:0000269" key="4">
    <source>
    </source>
</evidence>
<evidence type="ECO:0000303" key="5">
    <source>
    </source>
</evidence>
<evidence type="ECO:0000305" key="6"/>
<evidence type="ECO:0007829" key="7">
    <source>
        <dbReference type="PDB" id="8XYA"/>
    </source>
</evidence>
<name>PHKG1_HUMAN</name>
<reference key="1">
    <citation type="journal article" date="1995" name="Hum. Genet.">
        <title>Human cDNA encoding the muscle isoform of the phosphorylase kinase gamma subunit (PHKG1).</title>
        <authorList>
            <person name="Wehner M."/>
            <person name="Kilimann M.W."/>
        </authorList>
    </citation>
    <scope>NUCLEOTIDE SEQUENCE [MRNA] (ISOFORM 1)</scope>
    <source>
        <tissue>Skeletal muscle</tissue>
    </source>
</reference>
<reference key="2">
    <citation type="submission" date="2000-04" db="EMBL/GenBank/DDBJ databases">
        <authorList>
            <person name="Burwinkel B. Jr."/>
            <person name="Kilimann M.W. Sr."/>
        </authorList>
    </citation>
    <scope>NUCLEOTIDE SEQUENCE [GENOMIC DNA]</scope>
</reference>
<reference key="3">
    <citation type="journal article" date="2004" name="Nat. Genet.">
        <title>Complete sequencing and characterization of 21,243 full-length human cDNAs.</title>
        <authorList>
            <person name="Ota T."/>
            <person name="Suzuki Y."/>
            <person name="Nishikawa T."/>
            <person name="Otsuki T."/>
            <person name="Sugiyama T."/>
            <person name="Irie R."/>
            <person name="Wakamatsu A."/>
            <person name="Hayashi K."/>
            <person name="Sato H."/>
            <person name="Nagai K."/>
            <person name="Kimura K."/>
            <person name="Makita H."/>
            <person name="Sekine M."/>
            <person name="Obayashi M."/>
            <person name="Nishi T."/>
            <person name="Shibahara T."/>
            <person name="Tanaka T."/>
            <person name="Ishii S."/>
            <person name="Yamamoto J."/>
            <person name="Saito K."/>
            <person name="Kawai Y."/>
            <person name="Isono Y."/>
            <person name="Nakamura Y."/>
            <person name="Nagahari K."/>
            <person name="Murakami K."/>
            <person name="Yasuda T."/>
            <person name="Iwayanagi T."/>
            <person name="Wagatsuma M."/>
            <person name="Shiratori A."/>
            <person name="Sudo H."/>
            <person name="Hosoiri T."/>
            <person name="Kaku Y."/>
            <person name="Kodaira H."/>
            <person name="Kondo H."/>
            <person name="Sugawara M."/>
            <person name="Takahashi M."/>
            <person name="Kanda K."/>
            <person name="Yokoi T."/>
            <person name="Furuya T."/>
            <person name="Kikkawa E."/>
            <person name="Omura Y."/>
            <person name="Abe K."/>
            <person name="Kamihara K."/>
            <person name="Katsuta N."/>
            <person name="Sato K."/>
            <person name="Tanikawa M."/>
            <person name="Yamazaki M."/>
            <person name="Ninomiya K."/>
            <person name="Ishibashi T."/>
            <person name="Yamashita H."/>
            <person name="Murakawa K."/>
            <person name="Fujimori K."/>
            <person name="Tanai H."/>
            <person name="Kimata M."/>
            <person name="Watanabe M."/>
            <person name="Hiraoka S."/>
            <person name="Chiba Y."/>
            <person name="Ishida S."/>
            <person name="Ono Y."/>
            <person name="Takiguchi S."/>
            <person name="Watanabe S."/>
            <person name="Yosida M."/>
            <person name="Hotuta T."/>
            <person name="Kusano J."/>
            <person name="Kanehori K."/>
            <person name="Takahashi-Fujii A."/>
            <person name="Hara H."/>
            <person name="Tanase T.-O."/>
            <person name="Nomura Y."/>
            <person name="Togiya S."/>
            <person name="Komai F."/>
            <person name="Hara R."/>
            <person name="Takeuchi K."/>
            <person name="Arita M."/>
            <person name="Imose N."/>
            <person name="Musashino K."/>
            <person name="Yuuki H."/>
            <person name="Oshima A."/>
            <person name="Sasaki N."/>
            <person name="Aotsuka S."/>
            <person name="Yoshikawa Y."/>
            <person name="Matsunawa H."/>
            <person name="Ichihara T."/>
            <person name="Shiohata N."/>
            <person name="Sano S."/>
            <person name="Moriya S."/>
            <person name="Momiyama H."/>
            <person name="Satoh N."/>
            <person name="Takami S."/>
            <person name="Terashima Y."/>
            <person name="Suzuki O."/>
            <person name="Nakagawa S."/>
            <person name="Senoh A."/>
            <person name="Mizoguchi H."/>
            <person name="Goto Y."/>
            <person name="Shimizu F."/>
            <person name="Wakebe H."/>
            <person name="Hishigaki H."/>
            <person name="Watanabe T."/>
            <person name="Sugiyama A."/>
            <person name="Takemoto M."/>
            <person name="Kawakami B."/>
            <person name="Yamazaki M."/>
            <person name="Watanabe K."/>
            <person name="Kumagai A."/>
            <person name="Itakura S."/>
            <person name="Fukuzumi Y."/>
            <person name="Fujimori Y."/>
            <person name="Komiyama M."/>
            <person name="Tashiro H."/>
            <person name="Tanigami A."/>
            <person name="Fujiwara T."/>
            <person name="Ono T."/>
            <person name="Yamada K."/>
            <person name="Fujii Y."/>
            <person name="Ozaki K."/>
            <person name="Hirao M."/>
            <person name="Ohmori Y."/>
            <person name="Kawabata A."/>
            <person name="Hikiji T."/>
            <person name="Kobatake N."/>
            <person name="Inagaki H."/>
            <person name="Ikema Y."/>
            <person name="Okamoto S."/>
            <person name="Okitani R."/>
            <person name="Kawakami T."/>
            <person name="Noguchi S."/>
            <person name="Itoh T."/>
            <person name="Shigeta K."/>
            <person name="Senba T."/>
            <person name="Matsumura K."/>
            <person name="Nakajima Y."/>
            <person name="Mizuno T."/>
            <person name="Morinaga M."/>
            <person name="Sasaki M."/>
            <person name="Togashi T."/>
            <person name="Oyama M."/>
            <person name="Hata H."/>
            <person name="Watanabe M."/>
            <person name="Komatsu T."/>
            <person name="Mizushima-Sugano J."/>
            <person name="Satoh T."/>
            <person name="Shirai Y."/>
            <person name="Takahashi Y."/>
            <person name="Nakagawa K."/>
            <person name="Okumura K."/>
            <person name="Nagase T."/>
            <person name="Nomura N."/>
            <person name="Kikuchi H."/>
            <person name="Masuho Y."/>
            <person name="Yamashita R."/>
            <person name="Nakai K."/>
            <person name="Yada T."/>
            <person name="Nakamura Y."/>
            <person name="Ohara O."/>
            <person name="Isogai T."/>
            <person name="Sugano S."/>
        </authorList>
    </citation>
    <scope>NUCLEOTIDE SEQUENCE [LARGE SCALE MRNA] (ISOFORM 2)</scope>
    <source>
        <tissue>Adrenal gland</tissue>
    </source>
</reference>
<reference key="4">
    <citation type="journal article" date="2003" name="Nature">
        <title>The DNA sequence of human chromosome 7.</title>
        <authorList>
            <person name="Hillier L.W."/>
            <person name="Fulton R.S."/>
            <person name="Fulton L.A."/>
            <person name="Graves T.A."/>
            <person name="Pepin K.H."/>
            <person name="Wagner-McPherson C."/>
            <person name="Layman D."/>
            <person name="Maas J."/>
            <person name="Jaeger S."/>
            <person name="Walker R."/>
            <person name="Wylie K."/>
            <person name="Sekhon M."/>
            <person name="Becker M.C."/>
            <person name="O'Laughlin M.D."/>
            <person name="Schaller M.E."/>
            <person name="Fewell G.A."/>
            <person name="Delehaunty K.D."/>
            <person name="Miner T.L."/>
            <person name="Nash W.E."/>
            <person name="Cordes M."/>
            <person name="Du H."/>
            <person name="Sun H."/>
            <person name="Edwards J."/>
            <person name="Bradshaw-Cordum H."/>
            <person name="Ali J."/>
            <person name="Andrews S."/>
            <person name="Isak A."/>
            <person name="Vanbrunt A."/>
            <person name="Nguyen C."/>
            <person name="Du F."/>
            <person name="Lamar B."/>
            <person name="Courtney L."/>
            <person name="Kalicki J."/>
            <person name="Ozersky P."/>
            <person name="Bielicki L."/>
            <person name="Scott K."/>
            <person name="Holmes A."/>
            <person name="Harkins R."/>
            <person name="Harris A."/>
            <person name="Strong C.M."/>
            <person name="Hou S."/>
            <person name="Tomlinson C."/>
            <person name="Dauphin-Kohlberg S."/>
            <person name="Kozlowicz-Reilly A."/>
            <person name="Leonard S."/>
            <person name="Rohlfing T."/>
            <person name="Rock S.M."/>
            <person name="Tin-Wollam A.-M."/>
            <person name="Abbott A."/>
            <person name="Minx P."/>
            <person name="Maupin R."/>
            <person name="Strowmatt C."/>
            <person name="Latreille P."/>
            <person name="Miller N."/>
            <person name="Johnson D."/>
            <person name="Murray J."/>
            <person name="Woessner J.P."/>
            <person name="Wendl M.C."/>
            <person name="Yang S.-P."/>
            <person name="Schultz B.R."/>
            <person name="Wallis J.W."/>
            <person name="Spieth J."/>
            <person name="Bieri T.A."/>
            <person name="Nelson J.O."/>
            <person name="Berkowicz N."/>
            <person name="Wohldmann P.E."/>
            <person name="Cook L.L."/>
            <person name="Hickenbotham M.T."/>
            <person name="Eldred J."/>
            <person name="Williams D."/>
            <person name="Bedell J.A."/>
            <person name="Mardis E.R."/>
            <person name="Clifton S.W."/>
            <person name="Chissoe S.L."/>
            <person name="Marra M.A."/>
            <person name="Raymond C."/>
            <person name="Haugen E."/>
            <person name="Gillett W."/>
            <person name="Zhou Y."/>
            <person name="James R."/>
            <person name="Phelps K."/>
            <person name="Iadanoto S."/>
            <person name="Bubb K."/>
            <person name="Simms E."/>
            <person name="Levy R."/>
            <person name="Clendenning J."/>
            <person name="Kaul R."/>
            <person name="Kent W.J."/>
            <person name="Furey T.S."/>
            <person name="Baertsch R.A."/>
            <person name="Brent M.R."/>
            <person name="Keibler E."/>
            <person name="Flicek P."/>
            <person name="Bork P."/>
            <person name="Suyama M."/>
            <person name="Bailey J.A."/>
            <person name="Portnoy M.E."/>
            <person name="Torrents D."/>
            <person name="Chinwalla A.T."/>
            <person name="Gish W.R."/>
            <person name="Eddy S.R."/>
            <person name="McPherson J.D."/>
            <person name="Olson M.V."/>
            <person name="Eichler E.E."/>
            <person name="Green E.D."/>
            <person name="Waterston R.H."/>
            <person name="Wilson R.K."/>
        </authorList>
    </citation>
    <scope>NUCLEOTIDE SEQUENCE [LARGE SCALE GENOMIC DNA]</scope>
</reference>
<reference key="5">
    <citation type="submission" date="2005-07" db="EMBL/GenBank/DDBJ databases">
        <authorList>
            <person name="Mural R.J."/>
            <person name="Istrail S."/>
            <person name="Sutton G.G."/>
            <person name="Florea L."/>
            <person name="Halpern A.L."/>
            <person name="Mobarry C.M."/>
            <person name="Lippert R."/>
            <person name="Walenz B."/>
            <person name="Shatkay H."/>
            <person name="Dew I."/>
            <person name="Miller J.R."/>
            <person name="Flanigan M.J."/>
            <person name="Edwards N.J."/>
            <person name="Bolanos R."/>
            <person name="Fasulo D."/>
            <person name="Halldorsson B.V."/>
            <person name="Hannenhalli S."/>
            <person name="Turner R."/>
            <person name="Yooseph S."/>
            <person name="Lu F."/>
            <person name="Nusskern D.R."/>
            <person name="Shue B.C."/>
            <person name="Zheng X.H."/>
            <person name="Zhong F."/>
            <person name="Delcher A.L."/>
            <person name="Huson D.H."/>
            <person name="Kravitz S.A."/>
            <person name="Mouchard L."/>
            <person name="Reinert K."/>
            <person name="Remington K.A."/>
            <person name="Clark A.G."/>
            <person name="Waterman M.S."/>
            <person name="Eichler E.E."/>
            <person name="Adams M.D."/>
            <person name="Hunkapiller M.W."/>
            <person name="Myers E.W."/>
            <person name="Venter J.C."/>
        </authorList>
    </citation>
    <scope>NUCLEOTIDE SEQUENCE [LARGE SCALE GENOMIC DNA]</scope>
</reference>
<reference key="6">
    <citation type="journal article" date="2004" name="Genome Res.">
        <title>The status, quality, and expansion of the NIH full-length cDNA project: the Mammalian Gene Collection (MGC).</title>
        <authorList>
            <consortium name="The MGC Project Team"/>
        </authorList>
    </citation>
    <scope>NUCLEOTIDE SEQUENCE [LARGE SCALE MRNA] (ISOFORM 1)</scope>
    <source>
        <tissue>Salivary gland</tissue>
    </source>
</reference>
<reference key="7">
    <citation type="journal article" date="2007" name="Nature">
        <title>Patterns of somatic mutation in human cancer genomes.</title>
        <authorList>
            <person name="Greenman C."/>
            <person name="Stephens P."/>
            <person name="Smith R."/>
            <person name="Dalgliesh G.L."/>
            <person name="Hunter C."/>
            <person name="Bignell G."/>
            <person name="Davies H."/>
            <person name="Teague J."/>
            <person name="Butler A."/>
            <person name="Stevens C."/>
            <person name="Edkins S."/>
            <person name="O'Meara S."/>
            <person name="Vastrik I."/>
            <person name="Schmidt E.E."/>
            <person name="Avis T."/>
            <person name="Barthorpe S."/>
            <person name="Bhamra G."/>
            <person name="Buck G."/>
            <person name="Choudhury B."/>
            <person name="Clements J."/>
            <person name="Cole J."/>
            <person name="Dicks E."/>
            <person name="Forbes S."/>
            <person name="Gray K."/>
            <person name="Halliday K."/>
            <person name="Harrison R."/>
            <person name="Hills K."/>
            <person name="Hinton J."/>
            <person name="Jenkinson A."/>
            <person name="Jones D."/>
            <person name="Menzies A."/>
            <person name="Mironenko T."/>
            <person name="Perry J."/>
            <person name="Raine K."/>
            <person name="Richardson D."/>
            <person name="Shepherd R."/>
            <person name="Small A."/>
            <person name="Tofts C."/>
            <person name="Varian J."/>
            <person name="Webb T."/>
            <person name="West S."/>
            <person name="Widaa S."/>
            <person name="Yates A."/>
            <person name="Cahill D.P."/>
            <person name="Louis D.N."/>
            <person name="Goldstraw P."/>
            <person name="Nicholson A.G."/>
            <person name="Brasseur F."/>
            <person name="Looijenga L."/>
            <person name="Weber B.L."/>
            <person name="Chiew Y.-E."/>
            <person name="DeFazio A."/>
            <person name="Greaves M.F."/>
            <person name="Green A.R."/>
            <person name="Campbell P."/>
            <person name="Birney E."/>
            <person name="Easton D.F."/>
            <person name="Chenevix-Trench G."/>
            <person name="Tan M.-H."/>
            <person name="Khoo S.K."/>
            <person name="Teh B.T."/>
            <person name="Yuen S.T."/>
            <person name="Leung S.Y."/>
            <person name="Wooster R."/>
            <person name="Futreal P.A."/>
            <person name="Stratton M.R."/>
        </authorList>
    </citation>
    <scope>VARIANTS [LARGE SCALE ANALYSIS] MET-48 AND CYS-323</scope>
</reference>
<comment type="function">
    <text evidence="1">Catalytic subunit of the phosphorylase b kinase (PHK), which mediates the neural and hormonal regulation of glycogen breakdown (glycogenolysis) by phosphorylating and thereby activating glycogen phosphorylase. In vitro, phosphorylates PYGM, TNNI3, MAPT/TAU, GAP43 and NRGN/RC3 (By similarity).</text>
</comment>
<comment type="catalytic activity">
    <reaction>
        <text>2 ATP + phosphorylase b = 2 ADP + phosphorylase a.</text>
        <dbReference type="EC" id="2.7.11.19"/>
    </reaction>
</comment>
<comment type="catalytic activity">
    <reaction>
        <text>L-seryl-[tau protein] + ATP = O-phospho-L-seryl-[tau protein] + ADP + H(+)</text>
        <dbReference type="Rhea" id="RHEA:12801"/>
        <dbReference type="Rhea" id="RHEA-COMP:13701"/>
        <dbReference type="Rhea" id="RHEA-COMP:13702"/>
        <dbReference type="ChEBI" id="CHEBI:15378"/>
        <dbReference type="ChEBI" id="CHEBI:29999"/>
        <dbReference type="ChEBI" id="CHEBI:30616"/>
        <dbReference type="ChEBI" id="CHEBI:83421"/>
        <dbReference type="ChEBI" id="CHEBI:456216"/>
        <dbReference type="EC" id="2.7.11.26"/>
    </reaction>
</comment>
<comment type="catalytic activity">
    <reaction>
        <text>L-threonyl-[tau protein] + ATP = O-phospho-L-threonyl-[tau protein] + ADP + H(+)</text>
        <dbReference type="Rhea" id="RHEA:53904"/>
        <dbReference type="Rhea" id="RHEA-COMP:13703"/>
        <dbReference type="Rhea" id="RHEA-COMP:13704"/>
        <dbReference type="ChEBI" id="CHEBI:15378"/>
        <dbReference type="ChEBI" id="CHEBI:30013"/>
        <dbReference type="ChEBI" id="CHEBI:30616"/>
        <dbReference type="ChEBI" id="CHEBI:61977"/>
        <dbReference type="ChEBI" id="CHEBI:456216"/>
        <dbReference type="EC" id="2.7.11.26"/>
    </reaction>
</comment>
<comment type="catalytic activity">
    <reaction>
        <text>L-seryl-[protein] + ATP = O-phospho-L-seryl-[protein] + ADP + H(+)</text>
        <dbReference type="Rhea" id="RHEA:17989"/>
        <dbReference type="Rhea" id="RHEA-COMP:9863"/>
        <dbReference type="Rhea" id="RHEA-COMP:11604"/>
        <dbReference type="ChEBI" id="CHEBI:15378"/>
        <dbReference type="ChEBI" id="CHEBI:29999"/>
        <dbReference type="ChEBI" id="CHEBI:30616"/>
        <dbReference type="ChEBI" id="CHEBI:83421"/>
        <dbReference type="ChEBI" id="CHEBI:456216"/>
        <dbReference type="EC" id="2.7.11.1"/>
    </reaction>
</comment>
<comment type="catalytic activity">
    <reaction>
        <text>L-threonyl-[protein] + ATP = O-phospho-L-threonyl-[protein] + ADP + H(+)</text>
        <dbReference type="Rhea" id="RHEA:46608"/>
        <dbReference type="Rhea" id="RHEA-COMP:11060"/>
        <dbReference type="Rhea" id="RHEA-COMP:11605"/>
        <dbReference type="ChEBI" id="CHEBI:15378"/>
        <dbReference type="ChEBI" id="CHEBI:30013"/>
        <dbReference type="ChEBI" id="CHEBI:30616"/>
        <dbReference type="ChEBI" id="CHEBI:61977"/>
        <dbReference type="ChEBI" id="CHEBI:456216"/>
        <dbReference type="EC" id="2.7.11.1"/>
    </reaction>
</comment>
<comment type="subunit">
    <text>Hexadecamer of 4 heterotetramers, each composed of alpha, beta, gamma, and delta subunits. Alpha (PHKA1 or PHKA2) and beta (PHKB) are regulatory subunits, gamma (PHKG1 or PHKG2) is the catalytic subunit, and delta is calmodulin.</text>
</comment>
<comment type="alternative products">
    <event type="alternative splicing"/>
    <isoform>
        <id>Q16816-1</id>
        <name>1</name>
        <sequence type="displayed"/>
    </isoform>
    <isoform>
        <id>Q16816-2</id>
        <name>2</name>
        <sequence type="described" ref="VSP_044716"/>
    </isoform>
</comment>
<comment type="domain">
    <text evidence="1">The two calmodulin-binding domains appear to act in concert to bind a single molecule of calmodulin and are pseudosubstrate/autoinhibitory domains.</text>
</comment>
<comment type="similarity">
    <text evidence="6">Belongs to the protein kinase superfamily. CAMK Ser/Thr protein kinase family.</text>
</comment>
<sequence length="387" mass="45024">MTRDEALPDSHSAQDFYENYEPKEILGRGVSSVVRRCIHKPTSQEYAVKVIDVTGGGSFSPEEVRELREATLKEVDILRKVSGHPNIIQLKDTYETNTFFFLVFDLMKRGELFDYLTEKVTLSEKETRKIMRALLEVICTLHKLNIVHRDLKPENILLDDNMNIKLTDFGFSCQLEPGERLREVCGTPSYLAPEIIECSMNEDHPGYGKEVDMWSTGVIMYTLLAGSPPFWHRKQMLMLRMIMSGNYQFGSPEWDDYSDTVKDLVSRFLVVQPQNRYTAEEALAHPFFQQYLVEEVRHFSPRGKFKVIALTVLASVRIYYQYRRVKPVTREIVIRDPYALRPLRRLIDAYAFRIYGHWVKKGQQQNRAALFENTPKAVLLSLAEEDY</sequence>
<organism>
    <name type="scientific">Homo sapiens</name>
    <name type="common">Human</name>
    <dbReference type="NCBI Taxonomy" id="9606"/>
    <lineage>
        <taxon>Eukaryota</taxon>
        <taxon>Metazoa</taxon>
        <taxon>Chordata</taxon>
        <taxon>Craniata</taxon>
        <taxon>Vertebrata</taxon>
        <taxon>Euteleostomi</taxon>
        <taxon>Mammalia</taxon>
        <taxon>Eutheria</taxon>
        <taxon>Euarchontoglires</taxon>
        <taxon>Primates</taxon>
        <taxon>Haplorrhini</taxon>
        <taxon>Catarrhini</taxon>
        <taxon>Hominidae</taxon>
        <taxon>Homo</taxon>
    </lineage>
</organism>
<dbReference type="EC" id="2.7.11.19"/>
<dbReference type="EC" id="2.7.11.1"/>
<dbReference type="EC" id="2.7.11.26"/>
<dbReference type="EMBL" id="X80590">
    <property type="protein sequence ID" value="CAA56681.1"/>
    <property type="molecule type" value="mRNA"/>
</dbReference>
<dbReference type="EMBL" id="AF254253">
    <property type="protein sequence ID" value="AAL36972.1"/>
    <property type="molecule type" value="Genomic_DNA"/>
</dbReference>
<dbReference type="EMBL" id="AF254250">
    <property type="protein sequence ID" value="AAL36972.1"/>
    <property type="status" value="JOINED"/>
    <property type="molecule type" value="Genomic_DNA"/>
</dbReference>
<dbReference type="EMBL" id="AF254251">
    <property type="protein sequence ID" value="AAL36972.1"/>
    <property type="status" value="JOINED"/>
    <property type="molecule type" value="Genomic_DNA"/>
</dbReference>
<dbReference type="EMBL" id="AF254252">
    <property type="protein sequence ID" value="AAL36972.1"/>
    <property type="status" value="JOINED"/>
    <property type="molecule type" value="Genomic_DNA"/>
</dbReference>
<dbReference type="EMBL" id="AK293180">
    <property type="protein sequence ID" value="BAH11466.1"/>
    <property type="molecule type" value="mRNA"/>
</dbReference>
<dbReference type="EMBL" id="AC092101">
    <property type="protein sequence ID" value="AAS07453.1"/>
    <property type="molecule type" value="Genomic_DNA"/>
</dbReference>
<dbReference type="EMBL" id="CH471140">
    <property type="protein sequence ID" value="EAX07987.1"/>
    <property type="molecule type" value="Genomic_DNA"/>
</dbReference>
<dbReference type="EMBL" id="BC051327">
    <property type="protein sequence ID" value="AAH51327.1"/>
    <property type="molecule type" value="mRNA"/>
</dbReference>
<dbReference type="EMBL" id="BC069679">
    <property type="protein sequence ID" value="AAH69679.1"/>
    <property type="molecule type" value="mRNA"/>
</dbReference>
<dbReference type="EMBL" id="BC069738">
    <property type="protein sequence ID" value="AAH69738.1"/>
    <property type="molecule type" value="mRNA"/>
</dbReference>
<dbReference type="EMBL" id="BC069754">
    <property type="protein sequence ID" value="AAH69754.1"/>
    <property type="molecule type" value="mRNA"/>
</dbReference>
<dbReference type="EMBL" id="BC074753">
    <property type="protein sequence ID" value="AAH74753.1"/>
    <property type="molecule type" value="mRNA"/>
</dbReference>
<dbReference type="CCDS" id="CCDS5525.1">
    <molecule id="Q16816-1"/>
</dbReference>
<dbReference type="CCDS" id="CCDS59057.1">
    <molecule id="Q16816-2"/>
</dbReference>
<dbReference type="RefSeq" id="NP_001245388.1">
    <molecule id="Q16816-2"/>
    <property type="nucleotide sequence ID" value="NM_001258459.2"/>
</dbReference>
<dbReference type="RefSeq" id="NP_006204.1">
    <molecule id="Q16816-1"/>
    <property type="nucleotide sequence ID" value="NM_006213.5"/>
</dbReference>
<dbReference type="PDB" id="8JFK">
    <property type="method" value="EM"/>
    <property type="resolution" value="2.90 A"/>
    <property type="chains" value="C/G/K/O=1-387"/>
</dbReference>
<dbReference type="PDB" id="8JFL">
    <property type="method" value="EM"/>
    <property type="resolution" value="2.90 A"/>
    <property type="chains" value="C/G/K/O=1-387"/>
</dbReference>
<dbReference type="PDB" id="8XY7">
    <property type="method" value="EM"/>
    <property type="resolution" value="2.90 A"/>
    <property type="chains" value="C=1-387"/>
</dbReference>
<dbReference type="PDB" id="8XYA">
    <property type="method" value="EM"/>
    <property type="resolution" value="2.70 A"/>
    <property type="chains" value="C=1-387"/>
</dbReference>
<dbReference type="PDB" id="8XYB">
    <property type="method" value="EM"/>
    <property type="resolution" value="3.10 A"/>
    <property type="chains" value="C=1-387"/>
</dbReference>
<dbReference type="PDBsum" id="8JFK"/>
<dbReference type="PDBsum" id="8JFL"/>
<dbReference type="PDBsum" id="8XY7"/>
<dbReference type="PDBsum" id="8XYA"/>
<dbReference type="PDBsum" id="8XYB"/>
<dbReference type="EMDB" id="EMD-36212"/>
<dbReference type="EMDB" id="EMD-36213"/>
<dbReference type="SMR" id="Q16816"/>
<dbReference type="BioGRID" id="111278">
    <property type="interactions" value="4"/>
</dbReference>
<dbReference type="ComplexPortal" id="CPX-2640">
    <property type="entry name" value="Phosphorylase kinase, muscle variant"/>
</dbReference>
<dbReference type="CORUM" id="Q16816"/>
<dbReference type="FunCoup" id="Q16816">
    <property type="interactions" value="1554"/>
</dbReference>
<dbReference type="IntAct" id="Q16816">
    <property type="interactions" value="3"/>
</dbReference>
<dbReference type="STRING" id="9606.ENSP00000445440"/>
<dbReference type="BindingDB" id="Q16816"/>
<dbReference type="ChEMBL" id="CHEMBL4004"/>
<dbReference type="DrugBank" id="DB12010">
    <property type="generic name" value="Fostamatinib"/>
</dbReference>
<dbReference type="DrugCentral" id="Q16816"/>
<dbReference type="iPTMnet" id="Q16816"/>
<dbReference type="PhosphoSitePlus" id="Q16816"/>
<dbReference type="BioMuta" id="PHKG1"/>
<dbReference type="DMDM" id="2833281"/>
<dbReference type="CPTAC" id="non-CPTAC-3007"/>
<dbReference type="CPTAC" id="non-CPTAC-3008"/>
<dbReference type="jPOST" id="Q16816"/>
<dbReference type="MassIVE" id="Q16816"/>
<dbReference type="PaxDb" id="9606-ENSP00000445440"/>
<dbReference type="PeptideAtlas" id="Q16816"/>
<dbReference type="ProteomicsDB" id="26053"/>
<dbReference type="ProteomicsDB" id="61077">
    <molecule id="Q16816-1"/>
</dbReference>
<dbReference type="Pumba" id="Q16816"/>
<dbReference type="Antibodypedia" id="2094">
    <property type="antibodies" value="310 antibodies from 32 providers"/>
</dbReference>
<dbReference type="DNASU" id="5260"/>
<dbReference type="Ensembl" id="ENST00000297373.7">
    <molecule id="Q16816-1"/>
    <property type="protein sequence ID" value="ENSP00000297373.2"/>
    <property type="gene ID" value="ENSG00000164776.11"/>
</dbReference>
<dbReference type="Ensembl" id="ENST00000452681.6">
    <molecule id="Q16816-2"/>
    <property type="protein sequence ID" value="ENSP00000445440.1"/>
    <property type="gene ID" value="ENSG00000164776.11"/>
</dbReference>
<dbReference type="GeneID" id="5260"/>
<dbReference type="KEGG" id="hsa:5260"/>
<dbReference type="MANE-Select" id="ENST00000297373.7">
    <property type="protein sequence ID" value="ENSP00000297373.2"/>
    <property type="RefSeq nucleotide sequence ID" value="NM_006213.5"/>
    <property type="RefSeq protein sequence ID" value="NP_006204.1"/>
</dbReference>
<dbReference type="UCSC" id="uc003trz.3">
    <molecule id="Q16816-1"/>
    <property type="organism name" value="human"/>
</dbReference>
<dbReference type="AGR" id="HGNC:8930"/>
<dbReference type="CTD" id="5260"/>
<dbReference type="DisGeNET" id="5260"/>
<dbReference type="GeneCards" id="PHKG1"/>
<dbReference type="HGNC" id="HGNC:8930">
    <property type="gene designation" value="PHKG1"/>
</dbReference>
<dbReference type="HPA" id="ENSG00000164776">
    <property type="expression patterns" value="Group enriched (skeletal muscle, tongue)"/>
</dbReference>
<dbReference type="MalaCards" id="PHKG1"/>
<dbReference type="MIM" id="172470">
    <property type="type" value="gene"/>
</dbReference>
<dbReference type="neXtProt" id="NX_Q16816"/>
<dbReference type="OpenTargets" id="ENSG00000164776"/>
<dbReference type="Orphanet" id="715">
    <property type="disease" value="Glycogen storage disease due to muscle phosphorylase kinase deficiency"/>
</dbReference>
<dbReference type="PharmGKB" id="PA33271"/>
<dbReference type="VEuPathDB" id="HostDB:ENSG00000164776"/>
<dbReference type="eggNOG" id="KOG0599">
    <property type="taxonomic scope" value="Eukaryota"/>
</dbReference>
<dbReference type="GeneTree" id="ENSGT00940000158139"/>
<dbReference type="HOGENOM" id="CLU_000288_63_0_1"/>
<dbReference type="InParanoid" id="Q16816"/>
<dbReference type="OrthoDB" id="419455at2759"/>
<dbReference type="PAN-GO" id="Q16816">
    <property type="GO annotations" value="0 GO annotations based on evolutionary models"/>
</dbReference>
<dbReference type="PhylomeDB" id="Q16816"/>
<dbReference type="TreeFam" id="TF320349"/>
<dbReference type="BioCyc" id="MetaCyc:HS09136-MONOMER"/>
<dbReference type="BRENDA" id="2.7.11.19">
    <property type="organism ID" value="2681"/>
</dbReference>
<dbReference type="PathwayCommons" id="Q16816"/>
<dbReference type="Reactome" id="R-HSA-70221">
    <property type="pathway name" value="Glycogen breakdown (glycogenolysis)"/>
</dbReference>
<dbReference type="SignaLink" id="Q16816"/>
<dbReference type="SIGNOR" id="Q16816"/>
<dbReference type="BioGRID-ORCS" id="5260">
    <property type="hits" value="35 hits in 1185 CRISPR screens"/>
</dbReference>
<dbReference type="ChiTaRS" id="PHKG1">
    <property type="organism name" value="human"/>
</dbReference>
<dbReference type="GeneWiki" id="PHKG1"/>
<dbReference type="GenomeRNAi" id="5260"/>
<dbReference type="Pharos" id="Q16816">
    <property type="development level" value="Tchem"/>
</dbReference>
<dbReference type="PRO" id="PR:Q16816"/>
<dbReference type="Proteomes" id="UP000005640">
    <property type="component" value="Chromosome 7"/>
</dbReference>
<dbReference type="RNAct" id="Q16816">
    <property type="molecule type" value="protein"/>
</dbReference>
<dbReference type="Bgee" id="ENSG00000164776">
    <property type="expression patterns" value="Expressed in gastrocnemius and 105 other cell types or tissues"/>
</dbReference>
<dbReference type="ExpressionAtlas" id="Q16816">
    <property type="expression patterns" value="baseline and differential"/>
</dbReference>
<dbReference type="GO" id="GO:0005737">
    <property type="term" value="C:cytoplasm"/>
    <property type="evidence" value="ECO:0000318"/>
    <property type="project" value="GO_Central"/>
</dbReference>
<dbReference type="GO" id="GO:0005829">
    <property type="term" value="C:cytosol"/>
    <property type="evidence" value="ECO:0000304"/>
    <property type="project" value="Reactome"/>
</dbReference>
<dbReference type="GO" id="GO:0005964">
    <property type="term" value="C:phosphorylase kinase complex"/>
    <property type="evidence" value="ECO:0000318"/>
    <property type="project" value="GO_Central"/>
</dbReference>
<dbReference type="GO" id="GO:0005524">
    <property type="term" value="F:ATP binding"/>
    <property type="evidence" value="ECO:0007669"/>
    <property type="project" value="UniProtKB-KW"/>
</dbReference>
<dbReference type="GO" id="GO:0005516">
    <property type="term" value="F:calmodulin binding"/>
    <property type="evidence" value="ECO:0007669"/>
    <property type="project" value="UniProtKB-KW"/>
</dbReference>
<dbReference type="GO" id="GO:0019899">
    <property type="term" value="F:enzyme binding"/>
    <property type="evidence" value="ECO:0007669"/>
    <property type="project" value="Ensembl"/>
</dbReference>
<dbReference type="GO" id="GO:0004689">
    <property type="term" value="F:phosphorylase kinase activity"/>
    <property type="evidence" value="ECO:0000318"/>
    <property type="project" value="GO_Central"/>
</dbReference>
<dbReference type="GO" id="GO:0106310">
    <property type="term" value="F:protein serine kinase activity"/>
    <property type="evidence" value="ECO:0007669"/>
    <property type="project" value="RHEA"/>
</dbReference>
<dbReference type="GO" id="GO:0005975">
    <property type="term" value="P:carbohydrate metabolic process"/>
    <property type="evidence" value="ECO:0000303"/>
    <property type="project" value="ProtInc"/>
</dbReference>
<dbReference type="GO" id="GO:0005977">
    <property type="term" value="P:glycogen metabolic process"/>
    <property type="evidence" value="ECO:0000318"/>
    <property type="project" value="GO_Central"/>
</dbReference>
<dbReference type="GO" id="GO:0007165">
    <property type="term" value="P:signal transduction"/>
    <property type="evidence" value="ECO:0000318"/>
    <property type="project" value="GO_Central"/>
</dbReference>
<dbReference type="CDD" id="cd14182">
    <property type="entry name" value="STKc_PhKG1"/>
    <property type="match status" value="1"/>
</dbReference>
<dbReference type="FunFam" id="3.30.200.20:FF:000138">
    <property type="entry name" value="Phosphorylase b kinase gamma catalytic chain, liver/testis"/>
    <property type="match status" value="1"/>
</dbReference>
<dbReference type="FunFam" id="1.10.510.10:FF:000149">
    <property type="entry name" value="phosphorylase b kinase gamma catalytic chain, liver/testis isoform"/>
    <property type="match status" value="1"/>
</dbReference>
<dbReference type="Gene3D" id="3.30.200.20">
    <property type="entry name" value="Phosphorylase Kinase, domain 1"/>
    <property type="match status" value="1"/>
</dbReference>
<dbReference type="Gene3D" id="1.10.510.10">
    <property type="entry name" value="Transferase(Phosphotransferase) domain 1"/>
    <property type="match status" value="1"/>
</dbReference>
<dbReference type="InterPro" id="IPR011009">
    <property type="entry name" value="Kinase-like_dom_sf"/>
</dbReference>
<dbReference type="InterPro" id="IPR002291">
    <property type="entry name" value="Phosph_kin_gamma"/>
</dbReference>
<dbReference type="InterPro" id="IPR000719">
    <property type="entry name" value="Prot_kinase_dom"/>
</dbReference>
<dbReference type="InterPro" id="IPR017441">
    <property type="entry name" value="Protein_kinase_ATP_BS"/>
</dbReference>
<dbReference type="InterPro" id="IPR008271">
    <property type="entry name" value="Ser/Thr_kinase_AS"/>
</dbReference>
<dbReference type="PANTHER" id="PTHR24347">
    <property type="entry name" value="SERINE/THREONINE-PROTEIN KINASE"/>
    <property type="match status" value="1"/>
</dbReference>
<dbReference type="Pfam" id="PF00069">
    <property type="entry name" value="Pkinase"/>
    <property type="match status" value="1"/>
</dbReference>
<dbReference type="PRINTS" id="PR01049">
    <property type="entry name" value="PHOSPHBKNASE"/>
</dbReference>
<dbReference type="SMART" id="SM00220">
    <property type="entry name" value="S_TKc"/>
    <property type="match status" value="1"/>
</dbReference>
<dbReference type="SUPFAM" id="SSF56112">
    <property type="entry name" value="Protein kinase-like (PK-like)"/>
    <property type="match status" value="1"/>
</dbReference>
<dbReference type="PROSITE" id="PS00107">
    <property type="entry name" value="PROTEIN_KINASE_ATP"/>
    <property type="match status" value="1"/>
</dbReference>
<dbReference type="PROSITE" id="PS50011">
    <property type="entry name" value="PROTEIN_KINASE_DOM"/>
    <property type="match status" value="1"/>
</dbReference>
<dbReference type="PROSITE" id="PS00108">
    <property type="entry name" value="PROTEIN_KINASE_ST"/>
    <property type="match status" value="1"/>
</dbReference>
<accession>Q16816</accession>
<accession>B7Z1D0</accession>
<accession>F5H2S1</accession>
<accession>Q75LP5</accession>
<gene>
    <name type="primary">PHKG1</name>
    <name type="synonym">PHKG</name>
</gene>
<proteinExistence type="evidence at protein level"/>
<feature type="chain" id="PRO_0000086508" description="Phosphorylase b kinase gamma catalytic chain, skeletal muscle/heart isoform">
    <location>
        <begin position="1"/>
        <end position="387"/>
    </location>
</feature>
<feature type="domain" description="Protein kinase" evidence="2">
    <location>
        <begin position="20"/>
        <end position="288"/>
    </location>
</feature>
<feature type="region of interest" description="Calmodulin-binding (domain-N)">
    <location>
        <begin position="303"/>
        <end position="327"/>
    </location>
</feature>
<feature type="region of interest" description="Calmodulin-binding (domain-C)">
    <location>
        <begin position="343"/>
        <end position="367"/>
    </location>
</feature>
<feature type="active site" description="Proton acceptor" evidence="2 3">
    <location>
        <position position="150"/>
    </location>
</feature>
<feature type="binding site" evidence="2">
    <location>
        <begin position="26"/>
        <end position="34"/>
    </location>
    <ligand>
        <name>ATP</name>
        <dbReference type="ChEBI" id="CHEBI:30616"/>
    </ligand>
</feature>
<feature type="binding site" evidence="2">
    <location>
        <position position="49"/>
    </location>
    <ligand>
        <name>ATP</name>
        <dbReference type="ChEBI" id="CHEBI:30616"/>
    </ligand>
</feature>
<feature type="splice variant" id="VSP_044716" description="In isoform 2." evidence="5">
    <original>L</original>
    <variation>LWEDTDTMEMEQKWCLGWDSPKSTNFRAQGRAR</variation>
    <location>
        <position position="106"/>
    </location>
</feature>
<feature type="sequence variant" id="VAR_040994" description="In a colorectal adenocarcinoma sample; somatic mutation; dbSNP:rs368370244." evidence="4">
    <original>V</original>
    <variation>M</variation>
    <location>
        <position position="48"/>
    </location>
</feature>
<feature type="sequence variant" id="VAR_040995" description="In dbSNP:rs149458708." evidence="4">
    <original>R</original>
    <variation>C</variation>
    <location>
        <position position="323"/>
    </location>
</feature>
<feature type="sequence conflict" description="In Ref. 3; BAH11466." evidence="6" ref="3">
    <original>F</original>
    <variation>L</variation>
    <location>
        <position position="100"/>
    </location>
</feature>
<feature type="helix" evidence="7">
    <location>
        <begin position="13"/>
        <end position="17"/>
    </location>
</feature>
<feature type="strand" evidence="7">
    <location>
        <begin position="20"/>
        <end position="27"/>
    </location>
</feature>
<feature type="strand" evidence="7">
    <location>
        <begin position="30"/>
        <end position="39"/>
    </location>
</feature>
<feature type="turn" evidence="7">
    <location>
        <begin position="40"/>
        <end position="43"/>
    </location>
</feature>
<feature type="strand" evidence="7">
    <location>
        <begin position="44"/>
        <end position="54"/>
    </location>
</feature>
<feature type="helix" evidence="7">
    <location>
        <begin position="55"/>
        <end position="57"/>
    </location>
</feature>
<feature type="helix" evidence="7">
    <location>
        <begin position="61"/>
        <end position="80"/>
    </location>
</feature>
<feature type="strand" evidence="7">
    <location>
        <begin position="92"/>
        <end position="95"/>
    </location>
</feature>
<feature type="strand" evidence="7">
    <location>
        <begin position="97"/>
        <end position="105"/>
    </location>
</feature>
<feature type="helix" evidence="7">
    <location>
        <begin position="112"/>
        <end position="118"/>
    </location>
</feature>
<feature type="strand" evidence="7">
    <location>
        <begin position="119"/>
        <end position="121"/>
    </location>
</feature>
<feature type="helix" evidence="7">
    <location>
        <begin position="124"/>
        <end position="143"/>
    </location>
</feature>
<feature type="helix" evidence="7">
    <location>
        <begin position="153"/>
        <end position="155"/>
    </location>
</feature>
<feature type="strand" evidence="7">
    <location>
        <begin position="156"/>
        <end position="158"/>
    </location>
</feature>
<feature type="strand" evidence="7">
    <location>
        <begin position="164"/>
        <end position="166"/>
    </location>
</feature>
<feature type="helix" evidence="7">
    <location>
        <begin position="188"/>
        <end position="190"/>
    </location>
</feature>
<feature type="helix" evidence="7">
    <location>
        <begin position="193"/>
        <end position="200"/>
    </location>
</feature>
<feature type="strand" evidence="7">
    <location>
        <begin position="202"/>
        <end position="204"/>
    </location>
</feature>
<feature type="helix" evidence="7">
    <location>
        <begin position="211"/>
        <end position="225"/>
    </location>
</feature>
<feature type="helix" evidence="7">
    <location>
        <begin position="235"/>
        <end position="244"/>
    </location>
</feature>
<feature type="helix" evidence="7">
    <location>
        <begin position="253"/>
        <end position="255"/>
    </location>
</feature>
<feature type="helix" evidence="7">
    <location>
        <begin position="259"/>
        <end position="269"/>
    </location>
</feature>
<feature type="helix" evidence="7">
    <location>
        <begin position="273"/>
        <end position="275"/>
    </location>
</feature>
<feature type="helix" evidence="7">
    <location>
        <begin position="279"/>
        <end position="282"/>
    </location>
</feature>
<feature type="helix" evidence="7">
    <location>
        <begin position="286"/>
        <end position="288"/>
    </location>
</feature>
<feature type="helix" evidence="7">
    <location>
        <begin position="301"/>
        <end position="324"/>
    </location>
</feature>
<feature type="helix" evidence="7">
    <location>
        <begin position="330"/>
        <end position="335"/>
    </location>
</feature>
<feature type="turn" evidence="7">
    <location>
        <begin position="337"/>
        <end position="339"/>
    </location>
</feature>
<feature type="helix" evidence="7">
    <location>
        <begin position="341"/>
        <end position="354"/>
    </location>
</feature>
<feature type="helix" evidence="7">
    <location>
        <begin position="356"/>
        <end position="358"/>
    </location>
</feature>
<feature type="strand" evidence="7">
    <location>
        <begin position="361"/>
        <end position="363"/>
    </location>
</feature>
<feature type="helix" evidence="7">
    <location>
        <begin position="367"/>
        <end position="370"/>
    </location>
</feature>
<feature type="helix" evidence="7">
    <location>
        <begin position="376"/>
        <end position="379"/>
    </location>
</feature>
<protein>
    <recommendedName>
        <fullName>Phosphorylase b kinase gamma catalytic chain, skeletal muscle/heart isoform</fullName>
        <shortName>PHK-gamma-M</shortName>
        <ecNumber>2.7.11.19</ecNumber>
    </recommendedName>
    <alternativeName>
        <fullName>Phosphorylase kinase subunit gamma-1</fullName>
    </alternativeName>
    <alternativeName>
        <fullName>Serine/threonine-protein kinase PHKG1</fullName>
        <ecNumber>2.7.11.1</ecNumber>
        <ecNumber>2.7.11.26</ecNumber>
    </alternativeName>
</protein>
<keyword id="KW-0002">3D-structure</keyword>
<keyword id="KW-0025">Alternative splicing</keyword>
<keyword id="KW-0067">ATP-binding</keyword>
<keyword id="KW-0112">Calmodulin-binding</keyword>
<keyword id="KW-0119">Carbohydrate metabolism</keyword>
<keyword id="KW-0321">Glycogen metabolism</keyword>
<keyword id="KW-0418">Kinase</keyword>
<keyword id="KW-0514">Muscle protein</keyword>
<keyword id="KW-0547">Nucleotide-binding</keyword>
<keyword id="KW-1267">Proteomics identification</keyword>
<keyword id="KW-1185">Reference proteome</keyword>
<keyword id="KW-0723">Serine/threonine-protein kinase</keyword>
<keyword id="KW-0808">Transferase</keyword>